<proteinExistence type="inferred from homology"/>
<feature type="chain" id="PRO_0000387798" description="4-hydroxy-2-oxovalerate aldolase">
    <location>
        <begin position="1"/>
        <end position="347"/>
    </location>
</feature>
<feature type="domain" description="Pyruvate carboxyltransferase" evidence="1">
    <location>
        <begin position="8"/>
        <end position="260"/>
    </location>
</feature>
<feature type="active site" description="Proton acceptor" evidence="1">
    <location>
        <position position="20"/>
    </location>
</feature>
<feature type="binding site" evidence="1">
    <location>
        <begin position="16"/>
        <end position="17"/>
    </location>
    <ligand>
        <name>substrate</name>
    </ligand>
</feature>
<feature type="binding site" evidence="1">
    <location>
        <position position="17"/>
    </location>
    <ligand>
        <name>Mn(2+)</name>
        <dbReference type="ChEBI" id="CHEBI:29035"/>
    </ligand>
</feature>
<feature type="binding site" evidence="1">
    <location>
        <position position="170"/>
    </location>
    <ligand>
        <name>substrate</name>
    </ligand>
</feature>
<feature type="binding site" evidence="1">
    <location>
        <position position="199"/>
    </location>
    <ligand>
        <name>Mn(2+)</name>
        <dbReference type="ChEBI" id="CHEBI:29035"/>
    </ligand>
</feature>
<feature type="binding site" evidence="1">
    <location>
        <position position="199"/>
    </location>
    <ligand>
        <name>substrate</name>
    </ligand>
</feature>
<feature type="binding site" evidence="1">
    <location>
        <position position="201"/>
    </location>
    <ligand>
        <name>Mn(2+)</name>
        <dbReference type="ChEBI" id="CHEBI:29035"/>
    </ligand>
</feature>
<feature type="binding site" evidence="1">
    <location>
        <position position="290"/>
    </location>
    <ligand>
        <name>substrate</name>
    </ligand>
</feature>
<feature type="site" description="Transition state stabilizer" evidence="1">
    <location>
        <position position="16"/>
    </location>
</feature>
<sequence>MTDSNKKIYVSDVTLRDGMHAIRHQYSLQSAVAIAQALDEAGVDSIEVAHGDGLAGSSFNYGFGAHTDLEWIEAVAATVKRAQVATLLLPGIGTVHDLRAAYDAGARVVRIATHCTEADISKQHIEYARSLGMDTVGFLMMSHMTSPEALAKQAKLMESYGAQCVYVVDSGVALNMRDVAERFDAFKAVLDPATQTGMHAHHNLSLGVANSIVALEHGCDRVDASLTGMGAGAGNAPLEVFIAAVDRMKLKHGCDVKQLIDAAEDIVRPLQERPVRVDRETLALGYAGVYSSFLRHTEAAAAKYGLSAFDIMVELGKRRMVGGQEDMIVDVALDMLKARELANQEAA</sequence>
<evidence type="ECO:0000255" key="1">
    <source>
        <dbReference type="HAMAP-Rule" id="MF_01656"/>
    </source>
</evidence>
<organism>
    <name type="scientific">Paraburkholderia phytofirmans (strain DSM 17436 / LMG 22146 / PsJN)</name>
    <name type="common">Burkholderia phytofirmans</name>
    <dbReference type="NCBI Taxonomy" id="398527"/>
    <lineage>
        <taxon>Bacteria</taxon>
        <taxon>Pseudomonadati</taxon>
        <taxon>Pseudomonadota</taxon>
        <taxon>Betaproteobacteria</taxon>
        <taxon>Burkholderiales</taxon>
        <taxon>Burkholderiaceae</taxon>
        <taxon>Paraburkholderia</taxon>
    </lineage>
</organism>
<reference key="1">
    <citation type="journal article" date="2011" name="J. Bacteriol.">
        <title>Complete genome sequence of the plant growth-promoting endophyte Burkholderia phytofirmans strain PsJN.</title>
        <authorList>
            <person name="Weilharter A."/>
            <person name="Mitter B."/>
            <person name="Shin M.V."/>
            <person name="Chain P.S."/>
            <person name="Nowak J."/>
            <person name="Sessitsch A."/>
        </authorList>
    </citation>
    <scope>NUCLEOTIDE SEQUENCE [LARGE SCALE GENOMIC DNA]</scope>
    <source>
        <strain>DSM 17436 / LMG 22146 / PsJN</strain>
    </source>
</reference>
<dbReference type="EC" id="4.1.3.39" evidence="1"/>
<dbReference type="EMBL" id="CP001052">
    <property type="protein sequence ID" value="ACD15883.1"/>
    <property type="molecule type" value="Genomic_DNA"/>
</dbReference>
<dbReference type="RefSeq" id="WP_012432497.1">
    <property type="nucleotide sequence ID" value="NC_010681.1"/>
</dbReference>
<dbReference type="SMR" id="B2T2S2"/>
<dbReference type="STRING" id="398527.Bphyt_1468"/>
<dbReference type="KEGG" id="bpy:Bphyt_1468"/>
<dbReference type="eggNOG" id="COG0119">
    <property type="taxonomic scope" value="Bacteria"/>
</dbReference>
<dbReference type="HOGENOM" id="CLU_049173_0_0_4"/>
<dbReference type="OrthoDB" id="9803573at2"/>
<dbReference type="Proteomes" id="UP000001739">
    <property type="component" value="Chromosome 1"/>
</dbReference>
<dbReference type="GO" id="GO:0003852">
    <property type="term" value="F:2-isopropylmalate synthase activity"/>
    <property type="evidence" value="ECO:0007669"/>
    <property type="project" value="TreeGrafter"/>
</dbReference>
<dbReference type="GO" id="GO:0008701">
    <property type="term" value="F:4-hydroxy-2-oxovalerate aldolase activity"/>
    <property type="evidence" value="ECO:0007669"/>
    <property type="project" value="UniProtKB-UniRule"/>
</dbReference>
<dbReference type="GO" id="GO:0030145">
    <property type="term" value="F:manganese ion binding"/>
    <property type="evidence" value="ECO:0007669"/>
    <property type="project" value="UniProtKB-UniRule"/>
</dbReference>
<dbReference type="GO" id="GO:0009056">
    <property type="term" value="P:catabolic process"/>
    <property type="evidence" value="ECO:0007669"/>
    <property type="project" value="UniProtKB-KW"/>
</dbReference>
<dbReference type="GO" id="GO:0009098">
    <property type="term" value="P:L-leucine biosynthetic process"/>
    <property type="evidence" value="ECO:0007669"/>
    <property type="project" value="TreeGrafter"/>
</dbReference>
<dbReference type="CDD" id="cd07943">
    <property type="entry name" value="DRE_TIM_HOA"/>
    <property type="match status" value="1"/>
</dbReference>
<dbReference type="FunFam" id="1.10.8.60:FF:000042">
    <property type="entry name" value="4-hydroxy-2-oxovalerate aldolase"/>
    <property type="match status" value="1"/>
</dbReference>
<dbReference type="Gene3D" id="1.10.8.60">
    <property type="match status" value="1"/>
</dbReference>
<dbReference type="Gene3D" id="3.20.20.70">
    <property type="entry name" value="Aldolase class I"/>
    <property type="match status" value="1"/>
</dbReference>
<dbReference type="HAMAP" id="MF_01656">
    <property type="entry name" value="HOA"/>
    <property type="match status" value="1"/>
</dbReference>
<dbReference type="InterPro" id="IPR050073">
    <property type="entry name" value="2-IPM_HCS-like"/>
</dbReference>
<dbReference type="InterPro" id="IPR017629">
    <property type="entry name" value="4OH_2_O-val_aldolase"/>
</dbReference>
<dbReference type="InterPro" id="IPR013785">
    <property type="entry name" value="Aldolase_TIM"/>
</dbReference>
<dbReference type="InterPro" id="IPR012425">
    <property type="entry name" value="DmpG_comm"/>
</dbReference>
<dbReference type="InterPro" id="IPR035685">
    <property type="entry name" value="DRE_TIM_HOA"/>
</dbReference>
<dbReference type="InterPro" id="IPR000891">
    <property type="entry name" value="PYR_CT"/>
</dbReference>
<dbReference type="NCBIfam" id="TIGR03217">
    <property type="entry name" value="4OH_2_O_val_ald"/>
    <property type="match status" value="1"/>
</dbReference>
<dbReference type="NCBIfam" id="NF006049">
    <property type="entry name" value="PRK08195.1"/>
    <property type="match status" value="1"/>
</dbReference>
<dbReference type="PANTHER" id="PTHR10277:SF9">
    <property type="entry name" value="2-ISOPROPYLMALATE SYNTHASE 1, CHLOROPLASTIC-RELATED"/>
    <property type="match status" value="1"/>
</dbReference>
<dbReference type="PANTHER" id="PTHR10277">
    <property type="entry name" value="HOMOCITRATE SYNTHASE-RELATED"/>
    <property type="match status" value="1"/>
</dbReference>
<dbReference type="Pfam" id="PF07836">
    <property type="entry name" value="DmpG_comm"/>
    <property type="match status" value="1"/>
</dbReference>
<dbReference type="Pfam" id="PF00682">
    <property type="entry name" value="HMGL-like"/>
    <property type="match status" value="1"/>
</dbReference>
<dbReference type="SUPFAM" id="SSF51569">
    <property type="entry name" value="Aldolase"/>
    <property type="match status" value="1"/>
</dbReference>
<dbReference type="SUPFAM" id="SSF89000">
    <property type="entry name" value="post-HMGL domain-like"/>
    <property type="match status" value="1"/>
</dbReference>
<dbReference type="PROSITE" id="PS50991">
    <property type="entry name" value="PYR_CT"/>
    <property type="match status" value="1"/>
</dbReference>
<accession>B2T2S2</accession>
<protein>
    <recommendedName>
        <fullName evidence="1">4-hydroxy-2-oxovalerate aldolase</fullName>
        <shortName evidence="1">HOA</shortName>
        <ecNumber evidence="1">4.1.3.39</ecNumber>
    </recommendedName>
    <alternativeName>
        <fullName evidence="1">4-hydroxy-2-keto-pentanoic acid aldolase</fullName>
    </alternativeName>
    <alternativeName>
        <fullName evidence="1">4-hydroxy-2-oxopentanoate aldolase</fullName>
    </alternativeName>
</protein>
<gene>
    <name type="ordered locus">Bphyt_1468</name>
</gene>
<keyword id="KW-0058">Aromatic hydrocarbons catabolism</keyword>
<keyword id="KW-0456">Lyase</keyword>
<keyword id="KW-0464">Manganese</keyword>
<keyword id="KW-0479">Metal-binding</keyword>
<name>HOA_PARPJ</name>
<comment type="catalytic activity">
    <reaction evidence="1">
        <text>(S)-4-hydroxy-2-oxopentanoate = acetaldehyde + pyruvate</text>
        <dbReference type="Rhea" id="RHEA:22624"/>
        <dbReference type="ChEBI" id="CHEBI:15343"/>
        <dbReference type="ChEBI" id="CHEBI:15361"/>
        <dbReference type="ChEBI" id="CHEBI:73143"/>
        <dbReference type="EC" id="4.1.3.39"/>
    </reaction>
</comment>
<comment type="similarity">
    <text evidence="1">Belongs to the 4-hydroxy-2-oxovalerate aldolase family.</text>
</comment>